<feature type="transit peptide" description="Chloroplast" evidence="2">
    <location>
        <begin position="1"/>
        <end position="67"/>
    </location>
</feature>
<feature type="chain" id="PRO_0000310736" description="Chloroplast processing peptidase">
    <location>
        <begin position="68"/>
        <end position="291"/>
    </location>
</feature>
<feature type="region of interest" description="Disordered" evidence="3">
    <location>
        <begin position="69"/>
        <end position="96"/>
    </location>
</feature>
<feature type="active site" evidence="1">
    <location>
        <position position="142"/>
    </location>
</feature>
<feature type="sequence conflict" description="In Ref. 3; AAN72018." evidence="5" ref="3">
    <original>L</original>
    <variation>Q</variation>
    <location>
        <position position="209"/>
    </location>
</feature>
<protein>
    <recommendedName>
        <fullName>Chloroplast processing peptidase</fullName>
        <ecNumber>3.4.21.89</ecNumber>
    </recommendedName>
    <alternativeName>
        <fullName>Signal peptidase I-3</fullName>
    </alternativeName>
</protein>
<dbReference type="EC" id="3.4.21.89"/>
<dbReference type="EMBL" id="AB020746">
    <property type="protein sequence ID" value="BAB02011.1"/>
    <property type="status" value="ALT_INIT"/>
    <property type="molecule type" value="Genomic_DNA"/>
</dbReference>
<dbReference type="EMBL" id="CP002686">
    <property type="protein sequence ID" value="AEE76927.1"/>
    <property type="molecule type" value="Genomic_DNA"/>
</dbReference>
<dbReference type="EMBL" id="BT002007">
    <property type="protein sequence ID" value="AAN72018.1"/>
    <property type="molecule type" value="mRNA"/>
</dbReference>
<dbReference type="EMBL" id="BT015406">
    <property type="protein sequence ID" value="AAU05529.1"/>
    <property type="molecule type" value="mRNA"/>
</dbReference>
<dbReference type="RefSeq" id="NP_001319633.1">
    <property type="nucleotide sequence ID" value="NM_001338695.1"/>
</dbReference>
<dbReference type="RefSeq" id="NP_189102.3">
    <property type="nucleotide sequence ID" value="NM_113370.3"/>
</dbReference>
<dbReference type="SMR" id="Q8H0W1"/>
<dbReference type="FunCoup" id="Q8H0W1">
    <property type="interactions" value="826"/>
</dbReference>
<dbReference type="STRING" id="3702.Q8H0W1"/>
<dbReference type="MEROPS" id="S26.A02"/>
<dbReference type="PaxDb" id="3702-AT3G24590.1"/>
<dbReference type="ProteomicsDB" id="234732"/>
<dbReference type="EnsemblPlants" id="AT3G24590.1">
    <property type="protein sequence ID" value="AT3G24590.1"/>
    <property type="gene ID" value="AT3G24590"/>
</dbReference>
<dbReference type="GeneID" id="822055"/>
<dbReference type="Gramene" id="AT3G24590.1">
    <property type="protein sequence ID" value="AT3G24590.1"/>
    <property type="gene ID" value="AT3G24590"/>
</dbReference>
<dbReference type="KEGG" id="ath:AT3G24590"/>
<dbReference type="Araport" id="AT3G24590"/>
<dbReference type="TAIR" id="AT3G24590">
    <property type="gene designation" value="PLSP1"/>
</dbReference>
<dbReference type="eggNOG" id="KOG0171">
    <property type="taxonomic scope" value="Eukaryota"/>
</dbReference>
<dbReference type="HOGENOM" id="CLU_028723_2_1_1"/>
<dbReference type="InParanoid" id="Q8H0W1"/>
<dbReference type="OMA" id="LPEWLNI"/>
<dbReference type="PhylomeDB" id="Q8H0W1"/>
<dbReference type="BRENDA" id="3.4.21.89">
    <property type="organism ID" value="399"/>
</dbReference>
<dbReference type="PRO" id="PR:Q8H0W1"/>
<dbReference type="Proteomes" id="UP000006548">
    <property type="component" value="Chromosome 3"/>
</dbReference>
<dbReference type="ExpressionAtlas" id="Q8H0W1">
    <property type="expression patterns" value="baseline and differential"/>
</dbReference>
<dbReference type="GO" id="GO:0009507">
    <property type="term" value="C:chloroplast"/>
    <property type="evidence" value="ECO:0007005"/>
    <property type="project" value="TAIR"/>
</dbReference>
<dbReference type="GO" id="GO:0009941">
    <property type="term" value="C:chloroplast envelope"/>
    <property type="evidence" value="ECO:0007669"/>
    <property type="project" value="UniProtKB-SubCell"/>
</dbReference>
<dbReference type="GO" id="GO:0009535">
    <property type="term" value="C:chloroplast thylakoid membrane"/>
    <property type="evidence" value="ECO:0000314"/>
    <property type="project" value="TAIR"/>
</dbReference>
<dbReference type="GO" id="GO:0009526">
    <property type="term" value="C:plastid envelope"/>
    <property type="evidence" value="ECO:0000314"/>
    <property type="project" value="TAIR"/>
</dbReference>
<dbReference type="GO" id="GO:0055035">
    <property type="term" value="C:plastid thylakoid membrane"/>
    <property type="evidence" value="ECO:0000314"/>
    <property type="project" value="TAIR"/>
</dbReference>
<dbReference type="GO" id="GO:0008233">
    <property type="term" value="F:peptidase activity"/>
    <property type="evidence" value="ECO:0000314"/>
    <property type="project" value="TAIR"/>
</dbReference>
<dbReference type="GO" id="GO:0004252">
    <property type="term" value="F:serine-type endopeptidase activity"/>
    <property type="evidence" value="ECO:0007669"/>
    <property type="project" value="UniProtKB-EC"/>
</dbReference>
<dbReference type="GO" id="GO:0051604">
    <property type="term" value="P:protein maturation"/>
    <property type="evidence" value="ECO:0000315"/>
    <property type="project" value="TAIR"/>
</dbReference>
<dbReference type="GO" id="GO:0006465">
    <property type="term" value="P:signal peptide processing"/>
    <property type="evidence" value="ECO:0007669"/>
    <property type="project" value="InterPro"/>
</dbReference>
<dbReference type="GO" id="GO:0010027">
    <property type="term" value="P:thylakoid membrane organization"/>
    <property type="evidence" value="ECO:0000315"/>
    <property type="project" value="TAIR"/>
</dbReference>
<dbReference type="CDD" id="cd06530">
    <property type="entry name" value="S26_SPase_I"/>
    <property type="match status" value="1"/>
</dbReference>
<dbReference type="FunFam" id="2.10.109.10:FF:000012">
    <property type="entry name" value="Peptidase/ serine-type peptidase"/>
    <property type="match status" value="1"/>
</dbReference>
<dbReference type="Gene3D" id="2.10.109.10">
    <property type="entry name" value="Umud Fragment, subunit A"/>
    <property type="match status" value="1"/>
</dbReference>
<dbReference type="InterPro" id="IPR036286">
    <property type="entry name" value="LexA/Signal_pep-like_sf"/>
</dbReference>
<dbReference type="InterPro" id="IPR000223">
    <property type="entry name" value="Pept_S26A_signal_pept_1"/>
</dbReference>
<dbReference type="InterPro" id="IPR019758">
    <property type="entry name" value="Pept_S26A_signal_pept_1_CS"/>
</dbReference>
<dbReference type="InterPro" id="IPR019756">
    <property type="entry name" value="Pept_S26A_signal_pept_1_Ser-AS"/>
</dbReference>
<dbReference type="InterPro" id="IPR019533">
    <property type="entry name" value="Peptidase_S26"/>
</dbReference>
<dbReference type="NCBIfam" id="TIGR02227">
    <property type="entry name" value="sigpep_I_bact"/>
    <property type="match status" value="1"/>
</dbReference>
<dbReference type="PANTHER" id="PTHR43390:SF1">
    <property type="entry name" value="CHLOROPLAST PROCESSING PEPTIDASE"/>
    <property type="match status" value="1"/>
</dbReference>
<dbReference type="PANTHER" id="PTHR43390">
    <property type="entry name" value="SIGNAL PEPTIDASE I"/>
    <property type="match status" value="1"/>
</dbReference>
<dbReference type="Pfam" id="PF10502">
    <property type="entry name" value="Peptidase_S26"/>
    <property type="match status" value="1"/>
</dbReference>
<dbReference type="PRINTS" id="PR00727">
    <property type="entry name" value="LEADERPTASE"/>
</dbReference>
<dbReference type="SUPFAM" id="SSF51306">
    <property type="entry name" value="LexA/Signal peptidase"/>
    <property type="match status" value="1"/>
</dbReference>
<dbReference type="PROSITE" id="PS00501">
    <property type="entry name" value="SPASE_I_1"/>
    <property type="match status" value="1"/>
</dbReference>
<dbReference type="PROSITE" id="PS00761">
    <property type="entry name" value="SPASE_I_3"/>
    <property type="match status" value="1"/>
</dbReference>
<proteinExistence type="evidence at transcript level"/>
<evidence type="ECO:0000250" key="1"/>
<evidence type="ECO:0000255" key="2"/>
<evidence type="ECO:0000256" key="3">
    <source>
        <dbReference type="SAM" id="MobiDB-lite"/>
    </source>
</evidence>
<evidence type="ECO:0000269" key="4">
    <source>
    </source>
</evidence>
<evidence type="ECO:0000305" key="5"/>
<keyword id="KW-0150">Chloroplast</keyword>
<keyword id="KW-0378">Hydrolase</keyword>
<keyword id="KW-0472">Membrane</keyword>
<keyword id="KW-0934">Plastid</keyword>
<keyword id="KW-0645">Protease</keyword>
<keyword id="KW-1185">Reference proteome</keyword>
<keyword id="KW-0793">Thylakoid</keyword>
<keyword id="KW-0809">Transit peptide</keyword>
<organism>
    <name type="scientific">Arabidopsis thaliana</name>
    <name type="common">Mouse-ear cress</name>
    <dbReference type="NCBI Taxonomy" id="3702"/>
    <lineage>
        <taxon>Eukaryota</taxon>
        <taxon>Viridiplantae</taxon>
        <taxon>Streptophyta</taxon>
        <taxon>Embryophyta</taxon>
        <taxon>Tracheophyta</taxon>
        <taxon>Spermatophyta</taxon>
        <taxon>Magnoliopsida</taxon>
        <taxon>eudicotyledons</taxon>
        <taxon>Gunneridae</taxon>
        <taxon>Pentapetalae</taxon>
        <taxon>rosids</taxon>
        <taxon>malvids</taxon>
        <taxon>Brassicales</taxon>
        <taxon>Brassicaceae</taxon>
        <taxon>Camelineae</taxon>
        <taxon>Arabidopsis</taxon>
    </lineage>
</organism>
<sequence>MMVMISLHFSTPPLAFLKSDSNSRFLKNPNPNFIQFTPKSQLLFPQRLNFNTGTNLNRRTLSCYGIKDSSETTKSAPSLDSGDGGGGDGGDDDKGEVEEKNRLFPEWLDFTSDDAQTVFVAIAVSLAFRYFIAEPRYIPSLSMYPTFDVGDRLVAEKVSYYFRKPCANDIVIFKSPPVLQEVGYTDADVFIKRIVAKEGDLVEVHNGKLMVNGVARNEKFILEPPGYEMTPIRVPENSVFVMGDNRNNSYDSHVWGPLPLKNIIGRSVFRYWPPNRVSGTVLEGGCAVDKQ</sequence>
<accession>Q8H0W1</accession>
<accession>Q66GJ6</accession>
<accession>Q9LV44</accession>
<comment type="function">
    <text evidence="4">Involved in the maturation of the plastid protein translocation channel. Required for the biogenesis of plastid internal membranes. May also function as a thylakoidal processing peptidase.</text>
</comment>
<comment type="catalytic activity">
    <reaction>
        <text>Cleavage of hydrophobic, N-terminal signal or leader sequences from secreted and periplasmic proteins.</text>
        <dbReference type="EC" id="3.4.21.89"/>
    </reaction>
</comment>
<comment type="subcellular location">
    <subcellularLocation>
        <location evidence="4">Plastid</location>
        <location evidence="4">Chloroplast envelope</location>
    </subcellularLocation>
    <subcellularLocation>
        <location evidence="4">Plastid</location>
        <location evidence="4">Chloroplast thylakoid membrane</location>
    </subcellularLocation>
    <text>May be located at the envelope membranes in premature chloroplast and at the thylakoidal membrane in mature chloroplasts.</text>
</comment>
<comment type="disruption phenotype">
    <text evidence="4">Plants are albino and seedling lethal.</text>
</comment>
<comment type="similarity">
    <text evidence="5">Belongs to the peptidase S26 family.</text>
</comment>
<comment type="sequence caution" evidence="5">
    <conflict type="erroneous initiation">
        <sequence resource="EMBL-CDS" id="BAB02011"/>
    </conflict>
</comment>
<name>PLSP1_ARATH</name>
<reference key="1">
    <citation type="journal article" date="2000" name="DNA Res.">
        <title>Structural analysis of Arabidopsis thaliana chromosome 3. II. Sequence features of the 4,251,695 bp regions covered by 90 P1, TAC and BAC clones.</title>
        <authorList>
            <person name="Kaneko T."/>
            <person name="Katoh T."/>
            <person name="Sato S."/>
            <person name="Nakamura Y."/>
            <person name="Asamizu E."/>
            <person name="Tabata S."/>
        </authorList>
    </citation>
    <scope>NUCLEOTIDE SEQUENCE [LARGE SCALE GENOMIC DNA]</scope>
    <source>
        <strain>cv. Columbia</strain>
    </source>
</reference>
<reference key="2">
    <citation type="journal article" date="2017" name="Plant J.">
        <title>Araport11: a complete reannotation of the Arabidopsis thaliana reference genome.</title>
        <authorList>
            <person name="Cheng C.Y."/>
            <person name="Krishnakumar V."/>
            <person name="Chan A.P."/>
            <person name="Thibaud-Nissen F."/>
            <person name="Schobel S."/>
            <person name="Town C.D."/>
        </authorList>
    </citation>
    <scope>GENOME REANNOTATION</scope>
    <source>
        <strain>cv. Columbia</strain>
    </source>
</reference>
<reference key="3">
    <citation type="journal article" date="2003" name="Science">
        <title>Empirical analysis of transcriptional activity in the Arabidopsis genome.</title>
        <authorList>
            <person name="Yamada K."/>
            <person name="Lim J."/>
            <person name="Dale J.M."/>
            <person name="Chen H."/>
            <person name="Shinn P."/>
            <person name="Palm C.J."/>
            <person name="Southwick A.M."/>
            <person name="Wu H.C."/>
            <person name="Kim C.J."/>
            <person name="Nguyen M."/>
            <person name="Pham P.K."/>
            <person name="Cheuk R.F."/>
            <person name="Karlin-Newmann G."/>
            <person name="Liu S.X."/>
            <person name="Lam B."/>
            <person name="Sakano H."/>
            <person name="Wu T."/>
            <person name="Yu G."/>
            <person name="Miranda M."/>
            <person name="Quach H.L."/>
            <person name="Tripp M."/>
            <person name="Chang C.H."/>
            <person name="Lee J.M."/>
            <person name="Toriumi M.J."/>
            <person name="Chan M.M."/>
            <person name="Tang C.C."/>
            <person name="Onodera C.S."/>
            <person name="Deng J.M."/>
            <person name="Akiyama K."/>
            <person name="Ansari Y."/>
            <person name="Arakawa T."/>
            <person name="Banh J."/>
            <person name="Banno F."/>
            <person name="Bowser L."/>
            <person name="Brooks S.Y."/>
            <person name="Carninci P."/>
            <person name="Chao Q."/>
            <person name="Choy N."/>
            <person name="Enju A."/>
            <person name="Goldsmith A.D."/>
            <person name="Gurjal M."/>
            <person name="Hansen N.F."/>
            <person name="Hayashizaki Y."/>
            <person name="Johnson-Hopson C."/>
            <person name="Hsuan V.W."/>
            <person name="Iida K."/>
            <person name="Karnes M."/>
            <person name="Khan S."/>
            <person name="Koesema E."/>
            <person name="Ishida J."/>
            <person name="Jiang P.X."/>
            <person name="Jones T."/>
            <person name="Kawai J."/>
            <person name="Kamiya A."/>
            <person name="Meyers C."/>
            <person name="Nakajima M."/>
            <person name="Narusaka M."/>
            <person name="Seki M."/>
            <person name="Sakurai T."/>
            <person name="Satou M."/>
            <person name="Tamse R."/>
            <person name="Vaysberg M."/>
            <person name="Wallender E.K."/>
            <person name="Wong C."/>
            <person name="Yamamura Y."/>
            <person name="Yuan S."/>
            <person name="Shinozaki K."/>
            <person name="Davis R.W."/>
            <person name="Theologis A."/>
            <person name="Ecker J.R."/>
        </authorList>
    </citation>
    <scope>NUCLEOTIDE SEQUENCE [LARGE SCALE MRNA]</scope>
    <source>
        <strain>cv. Columbia</strain>
    </source>
</reference>
<reference key="4">
    <citation type="submission" date="2004-08" db="EMBL/GenBank/DDBJ databases">
        <title>Arabidopsis ORF clones.</title>
        <authorList>
            <person name="Cheuk R.F."/>
            <person name="Chen H."/>
            <person name="Kim C.J."/>
            <person name="Shinn P."/>
            <person name="Ecker J.R."/>
        </authorList>
    </citation>
    <scope>NUCLEOTIDE SEQUENCE [LARGE SCALE MRNA]</scope>
    <source>
        <strain>cv. Columbia</strain>
    </source>
</reference>
<reference key="5">
    <citation type="journal article" date="2005" name="J. Cell Biol.">
        <title>Complete maturation of the plastid protein translocation channel requires a type I signal peptidase.</title>
        <authorList>
            <person name="Inoue K."/>
            <person name="Baldwin A.J."/>
            <person name="Shipman R.L."/>
            <person name="Matsui K."/>
            <person name="Theg S.M."/>
            <person name="Ohme-Takagi M."/>
        </authorList>
    </citation>
    <scope>FUNCTION</scope>
    <scope>SUBCELLULAR LOCATION</scope>
    <scope>DISRUPTION PHENOTYPE</scope>
</reference>
<gene>
    <name type="primary">PLSP1</name>
    <name type="ordered locus">At3g24590</name>
    <name type="ORF">MOB24.17</name>
</gene>